<protein>
    <recommendedName>
        <fullName>Trehalose-phosphate phosphatase B</fullName>
        <shortName>AtTPPB</shortName>
        <ecNumber>3.1.3.12</ecNumber>
    </recommendedName>
    <alternativeName>
        <fullName>Trehalose 6-phosphate phosphatase</fullName>
    </alternativeName>
</protein>
<accession>Q9C9S4</accession>
<accession>O64897</accession>
<name>TPPB_ARATH</name>
<evidence type="ECO:0000250" key="1"/>
<evidence type="ECO:0000269" key="2">
    <source>
    </source>
</evidence>
<evidence type="ECO:0000269" key="3">
    <source>
    </source>
</evidence>
<evidence type="ECO:0000305" key="4"/>
<dbReference type="EC" id="3.1.3.12"/>
<dbReference type="EMBL" id="AF007779">
    <property type="protein sequence ID" value="AAC39370.1"/>
    <property type="molecule type" value="mRNA"/>
</dbReference>
<dbReference type="EMBL" id="AC012680">
    <property type="protein sequence ID" value="AAG52092.1"/>
    <property type="molecule type" value="Genomic_DNA"/>
</dbReference>
<dbReference type="EMBL" id="CP002684">
    <property type="protein sequence ID" value="AEE36066.1"/>
    <property type="molecule type" value="Genomic_DNA"/>
</dbReference>
<dbReference type="EMBL" id="BT002801">
    <property type="protein sequence ID" value="AAO22625.1"/>
    <property type="molecule type" value="mRNA"/>
</dbReference>
<dbReference type="EMBL" id="BT004348">
    <property type="protein sequence ID" value="AAO42342.1"/>
    <property type="molecule type" value="mRNA"/>
</dbReference>
<dbReference type="PIR" id="H96809">
    <property type="entry name" value="H96809"/>
</dbReference>
<dbReference type="PIR" id="T52058">
    <property type="entry name" value="T52058"/>
</dbReference>
<dbReference type="RefSeq" id="NP_177932.1">
    <property type="nucleotide sequence ID" value="NM_106458.4"/>
</dbReference>
<dbReference type="SMR" id="Q9C9S4"/>
<dbReference type="FunCoup" id="Q9C9S4">
    <property type="interactions" value="172"/>
</dbReference>
<dbReference type="STRING" id="3702.Q9C9S4"/>
<dbReference type="PaxDb" id="3702-AT1G78090.1"/>
<dbReference type="ProteomicsDB" id="234623"/>
<dbReference type="EnsemblPlants" id="AT1G78090.1">
    <property type="protein sequence ID" value="AT1G78090.1"/>
    <property type="gene ID" value="AT1G78090"/>
</dbReference>
<dbReference type="GeneID" id="844144"/>
<dbReference type="Gramene" id="AT1G78090.1">
    <property type="protein sequence ID" value="AT1G78090.1"/>
    <property type="gene ID" value="AT1G78090"/>
</dbReference>
<dbReference type="KEGG" id="ath:AT1G78090"/>
<dbReference type="Araport" id="AT1G78090"/>
<dbReference type="TAIR" id="AT1G78090">
    <property type="gene designation" value="TPPB"/>
</dbReference>
<dbReference type="eggNOG" id="KOG1050">
    <property type="taxonomic scope" value="Eukaryota"/>
</dbReference>
<dbReference type="HOGENOM" id="CLU_037265_1_2_1"/>
<dbReference type="InParanoid" id="Q9C9S4"/>
<dbReference type="OMA" id="RHLVEWK"/>
<dbReference type="OrthoDB" id="411251at2759"/>
<dbReference type="PhylomeDB" id="Q9C9S4"/>
<dbReference type="UniPathway" id="UPA00299"/>
<dbReference type="PRO" id="PR:Q9C9S4"/>
<dbReference type="Proteomes" id="UP000006548">
    <property type="component" value="Chromosome 1"/>
</dbReference>
<dbReference type="ExpressionAtlas" id="Q9C9S4">
    <property type="expression patterns" value="baseline and differential"/>
</dbReference>
<dbReference type="GO" id="GO:0004805">
    <property type="term" value="F:trehalose-phosphatase activity"/>
    <property type="evidence" value="ECO:0000314"/>
    <property type="project" value="TAIR"/>
</dbReference>
<dbReference type="GO" id="GO:0005992">
    <property type="term" value="P:trehalose biosynthetic process"/>
    <property type="evidence" value="ECO:0000314"/>
    <property type="project" value="TAIR"/>
</dbReference>
<dbReference type="CDD" id="cd01627">
    <property type="entry name" value="HAD_TPP"/>
    <property type="match status" value="1"/>
</dbReference>
<dbReference type="FunFam" id="3.30.70.1020:FF:000004">
    <property type="entry name" value="Trehalose 6-phosphate phosphatase"/>
    <property type="match status" value="1"/>
</dbReference>
<dbReference type="FunFam" id="3.40.50.1000:FF:000073">
    <property type="entry name" value="Trehalose 6-phosphate phosphatase"/>
    <property type="match status" value="1"/>
</dbReference>
<dbReference type="Gene3D" id="3.40.50.1000">
    <property type="entry name" value="HAD superfamily/HAD-like"/>
    <property type="match status" value="1"/>
</dbReference>
<dbReference type="Gene3D" id="3.30.70.1020">
    <property type="entry name" value="Trehalose-6-phosphate phosphatase related protein, domain 2"/>
    <property type="match status" value="1"/>
</dbReference>
<dbReference type="InterPro" id="IPR036412">
    <property type="entry name" value="HAD-like_sf"/>
</dbReference>
<dbReference type="InterPro" id="IPR006379">
    <property type="entry name" value="HAD-SF_hydro_IIB"/>
</dbReference>
<dbReference type="InterPro" id="IPR023214">
    <property type="entry name" value="HAD_sf"/>
</dbReference>
<dbReference type="InterPro" id="IPR044651">
    <property type="entry name" value="OTSB-like"/>
</dbReference>
<dbReference type="InterPro" id="IPR003337">
    <property type="entry name" value="Trehalose_PPase"/>
</dbReference>
<dbReference type="NCBIfam" id="TIGR01484">
    <property type="entry name" value="HAD-SF-IIB"/>
    <property type="match status" value="1"/>
</dbReference>
<dbReference type="NCBIfam" id="TIGR00685">
    <property type="entry name" value="T6PP"/>
    <property type="match status" value="1"/>
</dbReference>
<dbReference type="PANTHER" id="PTHR43768">
    <property type="entry name" value="TREHALOSE 6-PHOSPHATE PHOSPHATASE"/>
    <property type="match status" value="1"/>
</dbReference>
<dbReference type="PANTHER" id="PTHR43768:SF52">
    <property type="entry name" value="TREHALOSE-PHOSPHATE PHOSPHATASE B"/>
    <property type="match status" value="1"/>
</dbReference>
<dbReference type="Pfam" id="PF02358">
    <property type="entry name" value="Trehalose_PPase"/>
    <property type="match status" value="1"/>
</dbReference>
<dbReference type="SUPFAM" id="SSF56784">
    <property type="entry name" value="HAD-like"/>
    <property type="match status" value="1"/>
</dbReference>
<feature type="chain" id="PRO_0000417644" description="Trehalose-phosphate phosphatase B">
    <location>
        <begin position="1"/>
        <end position="374"/>
    </location>
</feature>
<feature type="sequence conflict" description="In Ref. 1; AAC39370." evidence="4" ref="1">
    <original>V</original>
    <variation>D</variation>
    <location>
        <position position="86"/>
    </location>
</feature>
<keyword id="KW-0378">Hydrolase</keyword>
<keyword id="KW-1185">Reference proteome</keyword>
<keyword id="KW-0346">Stress response</keyword>
<sequence length="374" mass="42449">MTNQNVIVSDRKPILGLKTITVSVSNSPLFSNSFPTYFNFPRRKLLKLLEAADKNNLVVAPKITSMIDSMRDSSPTRLRSSSYDSVSDNDDKTSWIVRFPSALNMFDEIVNAAKGKQIVMFLDYDGTLSPIVEDPDKAFITHEMREVVKDVASNFPTAIVTGRSIEKVRSFVQVNEIYYAGSHGMDIEGPTNENSNGQSNERVLFQPAREFLPMIEKVVNILEEKTKWIPGAMVENNKFCLSVHFRRVDEKRWPALAEVVKSVLIDYPKLKLTQGRKVLEIRPTIKWDKGQALNFLLKSLGYENSDDVVPVYIGDDRTDEDAFKVLRERGQGFGILVSKVPKDTNASYSLQDPSQVNKFLERLVEWKRKTVGEE</sequence>
<comment type="function">
    <text evidence="3">Removes the phosphate from trehalose 6-phosphate to produce free trehalose. Trehalose accumulation in plant may improve abiotic stress tolerance.</text>
</comment>
<comment type="catalytic activity">
    <reaction evidence="3">
        <text>alpha,alpha-trehalose 6-phosphate + H2O = alpha,alpha-trehalose + phosphate</text>
        <dbReference type="Rhea" id="RHEA:23420"/>
        <dbReference type="ChEBI" id="CHEBI:15377"/>
        <dbReference type="ChEBI" id="CHEBI:16551"/>
        <dbReference type="ChEBI" id="CHEBI:43474"/>
        <dbReference type="ChEBI" id="CHEBI:58429"/>
        <dbReference type="EC" id="3.1.3.12"/>
    </reaction>
</comment>
<comment type="cofactor">
    <cofactor evidence="1">
        <name>a divalent metal cation</name>
        <dbReference type="ChEBI" id="CHEBI:60240"/>
    </cofactor>
</comment>
<comment type="pathway">
    <text>Glycan biosynthesis; trehalose biosynthesis.</text>
</comment>
<comment type="tissue specificity">
    <text evidence="3">Expressed in flowers.</text>
</comment>
<comment type="induction">
    <text evidence="2">By trehalose.</text>
</comment>
<comment type="similarity">
    <text evidence="4">Belongs to the trehalose phosphatase family.</text>
</comment>
<organism>
    <name type="scientific">Arabidopsis thaliana</name>
    <name type="common">Mouse-ear cress</name>
    <dbReference type="NCBI Taxonomy" id="3702"/>
    <lineage>
        <taxon>Eukaryota</taxon>
        <taxon>Viridiplantae</taxon>
        <taxon>Streptophyta</taxon>
        <taxon>Embryophyta</taxon>
        <taxon>Tracheophyta</taxon>
        <taxon>Spermatophyta</taxon>
        <taxon>Magnoliopsida</taxon>
        <taxon>eudicotyledons</taxon>
        <taxon>Gunneridae</taxon>
        <taxon>Pentapetalae</taxon>
        <taxon>rosids</taxon>
        <taxon>malvids</taxon>
        <taxon>Brassicales</taxon>
        <taxon>Brassicaceae</taxon>
        <taxon>Camelineae</taxon>
        <taxon>Arabidopsis</taxon>
    </lineage>
</organism>
<reference key="1">
    <citation type="journal article" date="1998" name="Plant J.">
        <title>Trehalose-6-phosphate phosphatases from Arabidopsis thaliana: identification by functional complementation of the yeast tps2 mutant.</title>
        <authorList>
            <person name="Vogel G."/>
            <person name="Aeschbacher R.A."/>
            <person name="Muller J."/>
            <person name="Boller T."/>
            <person name="Wiemken A."/>
        </authorList>
    </citation>
    <scope>NUCLEOTIDE SEQUENCE [MRNA]</scope>
    <scope>FUNCTION</scope>
    <scope>CATALYTIC ACTIVITY</scope>
    <scope>TISSUE SPECIFICITY</scope>
    <source>
        <strain>cv. Landsberg erecta</strain>
    </source>
</reference>
<reference key="2">
    <citation type="journal article" date="2000" name="Nature">
        <title>Sequence and analysis of chromosome 1 of the plant Arabidopsis thaliana.</title>
        <authorList>
            <person name="Theologis A."/>
            <person name="Ecker J.R."/>
            <person name="Palm C.J."/>
            <person name="Federspiel N.A."/>
            <person name="Kaul S."/>
            <person name="White O."/>
            <person name="Alonso J."/>
            <person name="Altafi H."/>
            <person name="Araujo R."/>
            <person name="Bowman C.L."/>
            <person name="Brooks S.Y."/>
            <person name="Buehler E."/>
            <person name="Chan A."/>
            <person name="Chao Q."/>
            <person name="Chen H."/>
            <person name="Cheuk R.F."/>
            <person name="Chin C.W."/>
            <person name="Chung M.K."/>
            <person name="Conn L."/>
            <person name="Conway A.B."/>
            <person name="Conway A.R."/>
            <person name="Creasy T.H."/>
            <person name="Dewar K."/>
            <person name="Dunn P."/>
            <person name="Etgu P."/>
            <person name="Feldblyum T.V."/>
            <person name="Feng J.-D."/>
            <person name="Fong B."/>
            <person name="Fujii C.Y."/>
            <person name="Gill J.E."/>
            <person name="Goldsmith A.D."/>
            <person name="Haas B."/>
            <person name="Hansen N.F."/>
            <person name="Hughes B."/>
            <person name="Huizar L."/>
            <person name="Hunter J.L."/>
            <person name="Jenkins J."/>
            <person name="Johnson-Hopson C."/>
            <person name="Khan S."/>
            <person name="Khaykin E."/>
            <person name="Kim C.J."/>
            <person name="Koo H.L."/>
            <person name="Kremenetskaia I."/>
            <person name="Kurtz D.B."/>
            <person name="Kwan A."/>
            <person name="Lam B."/>
            <person name="Langin-Hooper S."/>
            <person name="Lee A."/>
            <person name="Lee J.M."/>
            <person name="Lenz C.A."/>
            <person name="Li J.H."/>
            <person name="Li Y.-P."/>
            <person name="Lin X."/>
            <person name="Liu S.X."/>
            <person name="Liu Z.A."/>
            <person name="Luros J.S."/>
            <person name="Maiti R."/>
            <person name="Marziali A."/>
            <person name="Militscher J."/>
            <person name="Miranda M."/>
            <person name="Nguyen M."/>
            <person name="Nierman W.C."/>
            <person name="Osborne B.I."/>
            <person name="Pai G."/>
            <person name="Peterson J."/>
            <person name="Pham P.K."/>
            <person name="Rizzo M."/>
            <person name="Rooney T."/>
            <person name="Rowley D."/>
            <person name="Sakano H."/>
            <person name="Salzberg S.L."/>
            <person name="Schwartz J.R."/>
            <person name="Shinn P."/>
            <person name="Southwick A.M."/>
            <person name="Sun H."/>
            <person name="Tallon L.J."/>
            <person name="Tambunga G."/>
            <person name="Toriumi M.J."/>
            <person name="Town C.D."/>
            <person name="Utterback T."/>
            <person name="Van Aken S."/>
            <person name="Vaysberg M."/>
            <person name="Vysotskaia V.S."/>
            <person name="Walker M."/>
            <person name="Wu D."/>
            <person name="Yu G."/>
            <person name="Fraser C.M."/>
            <person name="Venter J.C."/>
            <person name="Davis R.W."/>
        </authorList>
    </citation>
    <scope>NUCLEOTIDE SEQUENCE [LARGE SCALE GENOMIC DNA]</scope>
    <source>
        <strain>cv. Columbia</strain>
    </source>
</reference>
<reference key="3">
    <citation type="journal article" date="2017" name="Plant J.">
        <title>Araport11: a complete reannotation of the Arabidopsis thaliana reference genome.</title>
        <authorList>
            <person name="Cheng C.Y."/>
            <person name="Krishnakumar V."/>
            <person name="Chan A.P."/>
            <person name="Thibaud-Nissen F."/>
            <person name="Schobel S."/>
            <person name="Town C.D."/>
        </authorList>
    </citation>
    <scope>GENOME REANNOTATION</scope>
    <source>
        <strain>cv. Columbia</strain>
    </source>
</reference>
<reference key="4">
    <citation type="journal article" date="2003" name="Science">
        <title>Empirical analysis of transcriptional activity in the Arabidopsis genome.</title>
        <authorList>
            <person name="Yamada K."/>
            <person name="Lim J."/>
            <person name="Dale J.M."/>
            <person name="Chen H."/>
            <person name="Shinn P."/>
            <person name="Palm C.J."/>
            <person name="Southwick A.M."/>
            <person name="Wu H.C."/>
            <person name="Kim C.J."/>
            <person name="Nguyen M."/>
            <person name="Pham P.K."/>
            <person name="Cheuk R.F."/>
            <person name="Karlin-Newmann G."/>
            <person name="Liu S.X."/>
            <person name="Lam B."/>
            <person name="Sakano H."/>
            <person name="Wu T."/>
            <person name="Yu G."/>
            <person name="Miranda M."/>
            <person name="Quach H.L."/>
            <person name="Tripp M."/>
            <person name="Chang C.H."/>
            <person name="Lee J.M."/>
            <person name="Toriumi M.J."/>
            <person name="Chan M.M."/>
            <person name="Tang C.C."/>
            <person name="Onodera C.S."/>
            <person name="Deng J.M."/>
            <person name="Akiyama K."/>
            <person name="Ansari Y."/>
            <person name="Arakawa T."/>
            <person name="Banh J."/>
            <person name="Banno F."/>
            <person name="Bowser L."/>
            <person name="Brooks S.Y."/>
            <person name="Carninci P."/>
            <person name="Chao Q."/>
            <person name="Choy N."/>
            <person name="Enju A."/>
            <person name="Goldsmith A.D."/>
            <person name="Gurjal M."/>
            <person name="Hansen N.F."/>
            <person name="Hayashizaki Y."/>
            <person name="Johnson-Hopson C."/>
            <person name="Hsuan V.W."/>
            <person name="Iida K."/>
            <person name="Karnes M."/>
            <person name="Khan S."/>
            <person name="Koesema E."/>
            <person name="Ishida J."/>
            <person name="Jiang P.X."/>
            <person name="Jones T."/>
            <person name="Kawai J."/>
            <person name="Kamiya A."/>
            <person name="Meyers C."/>
            <person name="Nakajima M."/>
            <person name="Narusaka M."/>
            <person name="Seki M."/>
            <person name="Sakurai T."/>
            <person name="Satou M."/>
            <person name="Tamse R."/>
            <person name="Vaysberg M."/>
            <person name="Wallender E.K."/>
            <person name="Wong C."/>
            <person name="Yamamura Y."/>
            <person name="Yuan S."/>
            <person name="Shinozaki K."/>
            <person name="Davis R.W."/>
            <person name="Theologis A."/>
            <person name="Ecker J.R."/>
        </authorList>
    </citation>
    <scope>NUCLEOTIDE SEQUENCE [LARGE SCALE MRNA]</scope>
    <source>
        <strain>cv. Columbia</strain>
    </source>
</reference>
<reference key="5">
    <citation type="journal article" date="2003" name="J. Exp. Bot.">
        <title>Is trehalose-6-phosphate a regulator of sugar metabolism in plants?</title>
        <authorList>
            <person name="Eastmond P.J."/>
            <person name="Li Y."/>
            <person name="Graham I.A."/>
        </authorList>
    </citation>
    <scope>GENE FAMILY</scope>
</reference>
<reference key="6">
    <citation type="journal article" date="2004" name="Plant Physiol.">
        <title>Trehalose mediated growth inhibition of Arabidopsis seedlings is due to trehalose-6-phosphate accumulation.</title>
        <authorList>
            <person name="Schluepmann H."/>
            <person name="van Dijken A.J.H."/>
            <person name="Aghdasi M."/>
            <person name="Wobbes B."/>
            <person name="Paul M."/>
            <person name="Smeekens S.C.M."/>
        </authorList>
    </citation>
    <scope>INDUCTION</scope>
    <scope>NOMENCLATURE</scope>
</reference>
<gene>
    <name type="primary">TPPB</name>
    <name type="ordered locus">At1g78090</name>
    <name type="ORF">T11I11.2</name>
</gene>
<proteinExistence type="evidence at protein level"/>